<protein>
    <recommendedName>
        <fullName>Replication-associated protein A</fullName>
        <shortName>RepA</shortName>
        <ecNumber>3.1.21.-</ecNumber>
    </recommendedName>
</protein>
<proteinExistence type="evidence at protein level"/>
<comment type="function">
    <text evidence="1">Implicated in enhancement of V-sense gene expression. Acts a an inhibitor of C-sense gene transcription (By similarity).</text>
</comment>
<comment type="cofactor">
    <cofactor evidence="2">
        <name>Mg(2+)</name>
        <dbReference type="ChEBI" id="CHEBI:18420"/>
    </cofactor>
    <cofactor evidence="2">
        <name>Mn(2+)</name>
        <dbReference type="ChEBI" id="CHEBI:29035"/>
    </cofactor>
    <text evidence="2">Divalent metal cations, possibly Mg(2+) or Mn(2+).</text>
</comment>
<comment type="subunit">
    <text evidence="4 5">Homooligomer. Interacts (via LXCXE domain) with host retinoblastoma-related protein 1 (RBR1), and may thereby deregulate the host cell cycle. Part of the C- and V-complexes which are RepA-Rep-DNA complexes involved in the c-sense and v-sense transcription.</text>
</comment>
<comment type="subcellular location">
    <subcellularLocation>
        <location evidence="1">Host nucleus</location>
    </subcellularLocation>
    <subcellularLocation>
        <location evidence="1">Host cytoplasm</location>
    </subcellularLocation>
</comment>
<comment type="alternative products">
    <event type="alternative splicing"/>
    <isoform>
        <id>P06847-1</id>
        <name>RepA</name>
        <sequence type="displayed"/>
    </isoform>
    <isoform>
        <id>Q67622-1</id>
        <name>Rep</name>
        <sequence type="external"/>
    </isoform>
</comment>
<comment type="domain">
    <text>There are 3 rolling circle replication (RCR) motifs. RCR-2 may be involved in metal coordination. RCR-3 is required for phosphodiester bond cleavage for initiation of RCR.</text>
</comment>
<comment type="domain">
    <text>The LXCXE motif specifically binds to host RBR1.</text>
</comment>
<comment type="miscellaneous">
    <molecule>Isoform RepA</molecule>
    <text>Produced from the unspliced transcript.</text>
</comment>
<comment type="similarity">
    <text evidence="7">Belongs to the geminiviridae Rep protein family.</text>
</comment>
<feature type="chain" id="PRO_0000222220" description="Replication-associated protein A">
    <location>
        <begin position="1"/>
        <end position="264"/>
    </location>
</feature>
<feature type="domain" description="CRESS-DNA virus Rep endonuclease" evidence="2">
    <location>
        <begin position="10"/>
        <end position="123"/>
    </location>
</feature>
<feature type="region of interest" description="Oligomerization" evidence="1">
    <location>
        <begin position="173"/>
        <end position="185"/>
    </location>
</feature>
<feature type="region of interest" description="Disordered" evidence="3">
    <location>
        <begin position="237"/>
        <end position="264"/>
    </location>
</feature>
<feature type="short sequence motif" description="RCR-1" evidence="2">
    <location>
        <begin position="17"/>
        <end position="20"/>
    </location>
</feature>
<feature type="short sequence motif" description="RCR-2" evidence="2">
    <location>
        <begin position="59"/>
        <end position="61"/>
    </location>
</feature>
<feature type="short sequence motif" description="RCR-3" evidence="2">
    <location>
        <begin position="106"/>
        <end position="109"/>
    </location>
</feature>
<feature type="short sequence motif" description="LXCXE motif, interaction with host RBR1" evidence="7">
    <location>
        <begin position="194"/>
        <end position="198"/>
    </location>
</feature>
<feature type="active site" description="For DNA cleavage activity" evidence="2">
    <location>
        <position position="106"/>
    </location>
</feature>
<feature type="binding site" evidence="2">
    <location>
        <position position="51"/>
    </location>
    <ligand>
        <name>a divalent metal cation</name>
        <dbReference type="ChEBI" id="CHEBI:60240"/>
    </ligand>
</feature>
<feature type="binding site" evidence="2">
    <location>
        <position position="59"/>
    </location>
    <ligand>
        <name>a divalent metal cation</name>
        <dbReference type="ChEBI" id="CHEBI:60240"/>
    </ligand>
</feature>
<feature type="binding site" evidence="2">
    <location>
        <position position="61"/>
    </location>
    <ligand>
        <name>a divalent metal cation</name>
        <dbReference type="ChEBI" id="CHEBI:60240"/>
    </ligand>
</feature>
<feature type="binding site" evidence="2">
    <location>
        <position position="110"/>
    </location>
    <ligand>
        <name>a divalent metal cation</name>
        <dbReference type="ChEBI" id="CHEBI:60240"/>
    </ligand>
</feature>
<feature type="mutagenesis site" description="Loss of interaction with the human retinoblastoma-like protein 2." evidence="6">
    <original>C</original>
    <variation>G</variation>
    <location>
        <position position="196"/>
    </location>
</feature>
<feature type="mutagenesis site" description="Loss of interaction with the human retinoblastoma-like protein 2." evidence="6">
    <original>E</original>
    <variation>K</variation>
    <location>
        <position position="198"/>
    </location>
</feature>
<accession>P06847</accession>
<sequence length="264" mass="30157">MASSSAPRFRVYSKYLFLTYPECTLEPQYALDSLRTLLNKYEPLYIAAVRELHEDGSPHLHVLVQNKLRASITNPNALNLRMDTSPFSIFHPNIQAAKDCNQVRDYITKEVDSDVNTAEWGTFVAVSTPGRKDRDADMKQIIESSSSREEFLSMVCNRFPFEWSIRLKDFEYTARHLFPDPVATYTPEFPTESLICHETIESWKNEHLYSVSLESYILCTSTPADQAQSDLEWMDDYSRSHRGGISPSTSAGQPEQERLPGQGL</sequence>
<organism>
    <name type="scientific">Wheat dwarf virus (isolate Sweden)</name>
    <name type="common">WDV</name>
    <dbReference type="NCBI Taxonomy" id="268789"/>
    <lineage>
        <taxon>Viruses</taxon>
        <taxon>Monodnaviria</taxon>
        <taxon>Shotokuvirae</taxon>
        <taxon>Cressdnaviricota</taxon>
        <taxon>Repensiviricetes</taxon>
        <taxon>Geplafuvirales</taxon>
        <taxon>Geminiviridae</taxon>
        <taxon>Mastrevirus</taxon>
        <taxon>Wheat dwarf virus</taxon>
    </lineage>
</organism>
<keyword id="KW-0010">Activator</keyword>
<keyword id="KW-0025">Alternative splicing</keyword>
<keyword id="KW-0190">Covalent protein-DNA linkage</keyword>
<keyword id="KW-0235">DNA replication</keyword>
<keyword id="KW-0238">DNA-binding</keyword>
<keyword id="KW-0255">Endonuclease</keyword>
<keyword id="KW-1078">G1/S host cell cycle checkpoint dysregulation by virus</keyword>
<keyword id="KW-1035">Host cytoplasm</keyword>
<keyword id="KW-1048">Host nucleus</keyword>
<keyword id="KW-0945">Host-virus interaction</keyword>
<keyword id="KW-0378">Hydrolase</keyword>
<keyword id="KW-0479">Metal-binding</keyword>
<keyword id="KW-1121">Modulation of host cell cycle by virus</keyword>
<keyword id="KW-0540">Nuclease</keyword>
<keyword id="KW-0547">Nucleotide-binding</keyword>
<keyword id="KW-0548">Nucleotidyltransferase</keyword>
<keyword id="KW-1185">Reference proteome</keyword>
<keyword id="KW-0678">Repressor</keyword>
<keyword id="KW-0808">Transferase</keyword>
<gene>
    <name type="ORF">C1</name>
</gene>
<dbReference type="EC" id="3.1.21.-"/>
<dbReference type="EMBL" id="X02869">
    <property type="protein sequence ID" value="CAA26625.1"/>
    <property type="molecule type" value="Genomic_DNA"/>
</dbReference>
<dbReference type="SMR" id="P06847"/>
<dbReference type="ELM" id="P06847"/>
<dbReference type="Proteomes" id="UP000007629">
    <property type="component" value="Genome"/>
</dbReference>
<dbReference type="GO" id="GO:0030430">
    <property type="term" value="C:host cell cytoplasm"/>
    <property type="evidence" value="ECO:0007669"/>
    <property type="project" value="UniProtKB-SubCell"/>
</dbReference>
<dbReference type="GO" id="GO:0042025">
    <property type="term" value="C:host cell nucleus"/>
    <property type="evidence" value="ECO:0007669"/>
    <property type="project" value="UniProtKB-SubCell"/>
</dbReference>
<dbReference type="GO" id="GO:0003677">
    <property type="term" value="F:DNA binding"/>
    <property type="evidence" value="ECO:0007669"/>
    <property type="project" value="UniProtKB-KW"/>
</dbReference>
<dbReference type="GO" id="GO:0016888">
    <property type="term" value="F:endodeoxyribonuclease activity, producing 5'-phosphomonoesters"/>
    <property type="evidence" value="ECO:0007669"/>
    <property type="project" value="InterPro"/>
</dbReference>
<dbReference type="GO" id="GO:0046872">
    <property type="term" value="F:metal ion binding"/>
    <property type="evidence" value="ECO:0007669"/>
    <property type="project" value="UniProtKB-KW"/>
</dbReference>
<dbReference type="GO" id="GO:0000166">
    <property type="term" value="F:nucleotide binding"/>
    <property type="evidence" value="ECO:0007669"/>
    <property type="project" value="UniProtKB-KW"/>
</dbReference>
<dbReference type="GO" id="GO:0016779">
    <property type="term" value="F:nucleotidyltransferase activity"/>
    <property type="evidence" value="ECO:0007669"/>
    <property type="project" value="UniProtKB-KW"/>
</dbReference>
<dbReference type="GO" id="GO:0005198">
    <property type="term" value="F:structural molecule activity"/>
    <property type="evidence" value="ECO:0007669"/>
    <property type="project" value="InterPro"/>
</dbReference>
<dbReference type="GO" id="GO:0006260">
    <property type="term" value="P:DNA replication"/>
    <property type="evidence" value="ECO:0007669"/>
    <property type="project" value="UniProtKB-KW"/>
</dbReference>
<dbReference type="GO" id="GO:0039645">
    <property type="term" value="P:symbiont-mediated perturbation of host cell cycle G1/S transition checkpoint"/>
    <property type="evidence" value="ECO:0007669"/>
    <property type="project" value="UniProtKB-KW"/>
</dbReference>
<dbReference type="FunFam" id="3.40.1310.20:FF:000001">
    <property type="entry name" value="Replication-associated protein"/>
    <property type="match status" value="1"/>
</dbReference>
<dbReference type="Gene3D" id="3.40.1310.20">
    <property type="match status" value="1"/>
</dbReference>
<dbReference type="InterPro" id="IPR049912">
    <property type="entry name" value="CRESS_DNA_REP"/>
</dbReference>
<dbReference type="InterPro" id="IPR001301">
    <property type="entry name" value="Gemini_AL1_CLV"/>
</dbReference>
<dbReference type="InterPro" id="IPR001191">
    <property type="entry name" value="Gemini_AL1_REP"/>
</dbReference>
<dbReference type="InterPro" id="IPR022692">
    <property type="entry name" value="Gemini_AL1_REP_central"/>
</dbReference>
<dbReference type="Pfam" id="PF00799">
    <property type="entry name" value="Gemini_AL1"/>
    <property type="match status" value="1"/>
</dbReference>
<dbReference type="Pfam" id="PF08283">
    <property type="entry name" value="Gemini_AL1_M"/>
    <property type="match status" value="1"/>
</dbReference>
<dbReference type="PRINTS" id="PR00227">
    <property type="entry name" value="GEMCOATAL1"/>
</dbReference>
<dbReference type="PRINTS" id="PR00228">
    <property type="entry name" value="GEMCOATCLVL1"/>
</dbReference>
<dbReference type="SUPFAM" id="SSF55464">
    <property type="entry name" value="Origin of replication-binding domain, RBD-like"/>
    <property type="match status" value="1"/>
</dbReference>
<dbReference type="PROSITE" id="PS52020">
    <property type="entry name" value="CRESS_DNA_REP"/>
    <property type="match status" value="1"/>
</dbReference>
<evidence type="ECO:0000250" key="1"/>
<evidence type="ECO:0000255" key="2">
    <source>
        <dbReference type="PROSITE-ProRule" id="PRU01364"/>
    </source>
</evidence>
<evidence type="ECO:0000256" key="3">
    <source>
        <dbReference type="SAM" id="MobiDB-lite"/>
    </source>
</evidence>
<evidence type="ECO:0000269" key="4">
    <source>
    </source>
</evidence>
<evidence type="ECO:0000269" key="5">
    <source>
    </source>
</evidence>
<evidence type="ECO:0000269" key="6">
    <source>
    </source>
</evidence>
<evidence type="ECO:0000305" key="7"/>
<organismHost>
    <name type="scientific">Avena sativa</name>
    <name type="common">Oat</name>
    <dbReference type="NCBI Taxonomy" id="4498"/>
</organismHost>
<organismHost>
    <name type="scientific">Hordeum vulgare</name>
    <name type="common">Barley</name>
    <dbReference type="NCBI Taxonomy" id="4513"/>
</organismHost>
<organismHost>
    <name type="scientific">Lolium multiflorum</name>
    <name type="common">Italian ryegrass</name>
    <name type="synonym">Lolium perenne subsp. multiflorum</name>
    <dbReference type="NCBI Taxonomy" id="4521"/>
</organismHost>
<organismHost>
    <name type="scientific">Secale cereale</name>
    <name type="common">Rye</name>
    <dbReference type="NCBI Taxonomy" id="4550"/>
</organismHost>
<organismHost>
    <name type="scientific">Triticum aestivum</name>
    <name type="common">Wheat</name>
    <dbReference type="NCBI Taxonomy" id="4565"/>
</organismHost>
<reference key="1">
    <citation type="journal article" date="1985" name="EMBO J.">
        <title>The nucleotide sequence of cloned wheat dwarf virus DNA.</title>
        <authorList>
            <person name="McDowell S.W."/>
            <person name="McDonald H."/>
            <person name="Hamilton W.D.O."/>
            <person name="Coutts R.H.A."/>
            <person name="Buck K.W."/>
        </authorList>
    </citation>
    <scope>NUCLEOTIDE SEQUENCE [GENOMIC DNA]</scope>
</reference>
<reference key="2">
    <citation type="journal article" date="1995" name="EMBO J.">
        <title>Identification and analysis of a retinoblastoma binding motif in the replication protein of a plant DNA virus: requirement for efficient viral DNA replication.</title>
        <authorList>
            <person name="Xie Q."/>
            <person name="Suarez-Lopez P."/>
            <person name="Gutierrez C."/>
        </authorList>
    </citation>
    <scope>MUTAGENESIS OF CYS-196 AND GLU-198</scope>
</reference>
<reference key="3">
    <citation type="journal article" date="2000" name="Virology">
        <title>Relationship of oligomerization to DNA binding of Wheat dwarf virus RepA and Rep proteins.</title>
        <authorList>
            <person name="Missich R."/>
            <person name="Ramirez-Parra E."/>
            <person name="Gutierrez C."/>
        </authorList>
    </citation>
    <scope>SUBUNIT</scope>
    <scope>DNA-BINDING</scope>
</reference>
<reference key="4">
    <citation type="journal article" date="2004" name="Vet. Microbiol.">
        <title>Geminivirus DNA replication and cell cycle interactions.</title>
        <authorList>
            <person name="Gutierrez C."/>
            <person name="Ramirez-Parra E."/>
            <person name="Mar Castellano M."/>
            <person name="Sanz-Burgos A.P."/>
            <person name="Luque A."/>
            <person name="Missich R."/>
        </authorList>
    </citation>
    <scope>INTERACTION WITH ZEA MAYS RBR1</scope>
</reference>
<name>REPA_WDVS</name>